<sequence>MELPVPQKLPDPPRSFDEFLKSQNWDYWPRDVHFRDSDIWEDTLKKLEEAISYTSIYSYLWTNVPRLYDIVDSLESKLKESSHLLQHHASRLFESDKMISKKRSYTNLERYKAFVKEHYRPKKIALSDRMETEKNIEGCTFLFNQNEVTQLPRHLDAKQIYLYVLKTHNFEEKVFKVWKTHVLSDCSIALLHDSFWWWFLHKFKPDKRDEDFLFDRIAESYVTLFIKIPLRRKDAFFKMYPDCLTQAVYTTFQESFPESCSLFNDKFKEDLGNTIFLWLSGLKPETGFWTHWKLQDLCTTTIHGSRRVPVKLRRSVIPSQEHIPGIRDLKIEDILKNPRAYAMPKLMKESVASKAATKPSHYRSLGPEFHKVLFDFGGQSPLILYYLKMHELGGISVTHNPKGTKFTKILREPSPAPTYCDIIRDAKRKFADNKKDFKRVKQRIKDDIKFLREQQELIDKELDRIQAKASKNLQEVKNEFENFLHKQRVEAKLKEEYGGSTSASESPQSMQSPQSSSSFPTISEDFNNVEEG</sequence>
<dbReference type="EMBL" id="AL845292">
    <property type="status" value="NOT_ANNOTATED_CDS"/>
    <property type="molecule type" value="Genomic_DNA"/>
</dbReference>
<dbReference type="EMBL" id="AL929175">
    <property type="status" value="NOT_ANNOTATED_CDS"/>
    <property type="molecule type" value="Genomic_DNA"/>
</dbReference>
<dbReference type="EMBL" id="AK015893">
    <property type="protein sequence ID" value="BAB30022.1"/>
    <property type="status" value="ALT_SEQ"/>
    <property type="molecule type" value="mRNA"/>
</dbReference>
<dbReference type="CCDS" id="CCDS50697.1"/>
<dbReference type="RefSeq" id="NP_083731.2">
    <property type="nucleotide sequence ID" value="NM_029455.3"/>
</dbReference>
<dbReference type="SMR" id="Q9D518"/>
<dbReference type="FunCoup" id="Q9D518">
    <property type="interactions" value="39"/>
</dbReference>
<dbReference type="IntAct" id="Q9D518">
    <property type="interactions" value="2"/>
</dbReference>
<dbReference type="MINT" id="Q9D518"/>
<dbReference type="STRING" id="10090.ENSMUSP00000106076"/>
<dbReference type="PhosphoSitePlus" id="Q9D518"/>
<dbReference type="PaxDb" id="10090-ENSMUSP00000106076"/>
<dbReference type="ProteomicsDB" id="277022"/>
<dbReference type="Antibodypedia" id="53018">
    <property type="antibodies" value="21 antibodies from 9 providers"/>
</dbReference>
<dbReference type="Ensembl" id="ENSMUST00000110446.9">
    <property type="protein sequence ID" value="ENSMUSP00000106076.3"/>
    <property type="gene ID" value="ENSMUSG00000027209.19"/>
</dbReference>
<dbReference type="Ensembl" id="ENSMUST00000178118.8">
    <property type="protein sequence ID" value="ENSMUSP00000136349.2"/>
    <property type="gene ID" value="ENSMUSG00000027209.19"/>
</dbReference>
<dbReference type="GeneID" id="75823"/>
<dbReference type="KEGG" id="mmu:75823"/>
<dbReference type="UCSC" id="uc012cde.2">
    <property type="organism name" value="mouse"/>
</dbReference>
<dbReference type="AGR" id="MGI:1923073"/>
<dbReference type="CTD" id="196951"/>
<dbReference type="MGI" id="MGI:1923073">
    <property type="gene designation" value="Fam227b"/>
</dbReference>
<dbReference type="VEuPathDB" id="HostDB:ENSMUSG00000027209"/>
<dbReference type="eggNOG" id="ENOG502RXR1">
    <property type="taxonomic scope" value="Eukaryota"/>
</dbReference>
<dbReference type="GeneTree" id="ENSGT00940000162699"/>
<dbReference type="HOGENOM" id="CLU_028274_0_0_1"/>
<dbReference type="InParanoid" id="Q9D518"/>
<dbReference type="OrthoDB" id="73353at2759"/>
<dbReference type="PhylomeDB" id="Q9D518"/>
<dbReference type="TreeFam" id="TF328873"/>
<dbReference type="BioGRID-ORCS" id="75823">
    <property type="hits" value="2 hits in 78 CRISPR screens"/>
</dbReference>
<dbReference type="PRO" id="PR:Q9D518"/>
<dbReference type="Proteomes" id="UP000000589">
    <property type="component" value="Chromosome 2"/>
</dbReference>
<dbReference type="RNAct" id="Q9D518">
    <property type="molecule type" value="protein"/>
</dbReference>
<dbReference type="Bgee" id="ENSMUSG00000027209">
    <property type="expression patterns" value="Expressed in spermatid and 79 other cell types or tissues"/>
</dbReference>
<dbReference type="ExpressionAtlas" id="Q9D518">
    <property type="expression patterns" value="baseline and differential"/>
</dbReference>
<dbReference type="InterPro" id="IPR029417">
    <property type="entry name" value="FAM227"/>
</dbReference>
<dbReference type="PANTHER" id="PTHR33560">
    <property type="entry name" value="PROTEIN FAM227B"/>
    <property type="match status" value="1"/>
</dbReference>
<dbReference type="PANTHER" id="PTHR33560:SF2">
    <property type="entry name" value="PROTEIN FAM227B"/>
    <property type="match status" value="1"/>
</dbReference>
<dbReference type="Pfam" id="PF14922">
    <property type="entry name" value="FWWh"/>
    <property type="match status" value="1"/>
</dbReference>
<name>F227B_MOUSE</name>
<feature type="chain" id="PRO_0000244100" description="Protein FAM227B">
    <location>
        <begin position="1"/>
        <end position="532"/>
    </location>
</feature>
<feature type="region of interest" description="Disordered" evidence="2">
    <location>
        <begin position="494"/>
        <end position="532"/>
    </location>
</feature>
<feature type="coiled-coil region" evidence="1">
    <location>
        <begin position="432"/>
        <end position="482"/>
    </location>
</feature>
<feature type="compositionally biased region" description="Low complexity" evidence="2">
    <location>
        <begin position="500"/>
        <end position="523"/>
    </location>
</feature>
<feature type="sequence conflict" description="In Ref. 2; BAB30022." evidence="3" ref="2">
    <original>L</original>
    <variation>F</variation>
    <location>
        <position position="151"/>
    </location>
</feature>
<proteinExistence type="evidence at transcript level"/>
<gene>
    <name type="primary">Fam227b</name>
</gene>
<keyword id="KW-0175">Coiled coil</keyword>
<keyword id="KW-1185">Reference proteome</keyword>
<accession>Q9D518</accession>
<accession>A2AR82</accession>
<organism>
    <name type="scientific">Mus musculus</name>
    <name type="common">Mouse</name>
    <dbReference type="NCBI Taxonomy" id="10090"/>
    <lineage>
        <taxon>Eukaryota</taxon>
        <taxon>Metazoa</taxon>
        <taxon>Chordata</taxon>
        <taxon>Craniata</taxon>
        <taxon>Vertebrata</taxon>
        <taxon>Euteleostomi</taxon>
        <taxon>Mammalia</taxon>
        <taxon>Eutheria</taxon>
        <taxon>Euarchontoglires</taxon>
        <taxon>Glires</taxon>
        <taxon>Rodentia</taxon>
        <taxon>Myomorpha</taxon>
        <taxon>Muroidea</taxon>
        <taxon>Muridae</taxon>
        <taxon>Murinae</taxon>
        <taxon>Mus</taxon>
        <taxon>Mus</taxon>
    </lineage>
</organism>
<protein>
    <recommendedName>
        <fullName>Protein FAM227B</fullName>
    </recommendedName>
</protein>
<reference key="1">
    <citation type="journal article" date="2009" name="PLoS Biol.">
        <title>Lineage-specific biology revealed by a finished genome assembly of the mouse.</title>
        <authorList>
            <person name="Church D.M."/>
            <person name="Goodstadt L."/>
            <person name="Hillier L.W."/>
            <person name="Zody M.C."/>
            <person name="Goldstein S."/>
            <person name="She X."/>
            <person name="Bult C.J."/>
            <person name="Agarwala R."/>
            <person name="Cherry J.L."/>
            <person name="DiCuccio M."/>
            <person name="Hlavina W."/>
            <person name="Kapustin Y."/>
            <person name="Meric P."/>
            <person name="Maglott D."/>
            <person name="Birtle Z."/>
            <person name="Marques A.C."/>
            <person name="Graves T."/>
            <person name="Zhou S."/>
            <person name="Teague B."/>
            <person name="Potamousis K."/>
            <person name="Churas C."/>
            <person name="Place M."/>
            <person name="Herschleb J."/>
            <person name="Runnheim R."/>
            <person name="Forrest D."/>
            <person name="Amos-Landgraf J."/>
            <person name="Schwartz D.C."/>
            <person name="Cheng Z."/>
            <person name="Lindblad-Toh K."/>
            <person name="Eichler E.E."/>
            <person name="Ponting C.P."/>
        </authorList>
    </citation>
    <scope>NUCLEOTIDE SEQUENCE [LARGE SCALE GENOMIC DNA]</scope>
    <source>
        <strain>C57BL/6J</strain>
    </source>
</reference>
<reference key="2">
    <citation type="journal article" date="2005" name="Science">
        <title>The transcriptional landscape of the mammalian genome.</title>
        <authorList>
            <person name="Carninci P."/>
            <person name="Kasukawa T."/>
            <person name="Katayama S."/>
            <person name="Gough J."/>
            <person name="Frith M.C."/>
            <person name="Maeda N."/>
            <person name="Oyama R."/>
            <person name="Ravasi T."/>
            <person name="Lenhard B."/>
            <person name="Wells C."/>
            <person name="Kodzius R."/>
            <person name="Shimokawa K."/>
            <person name="Bajic V.B."/>
            <person name="Brenner S.E."/>
            <person name="Batalov S."/>
            <person name="Forrest A.R."/>
            <person name="Zavolan M."/>
            <person name="Davis M.J."/>
            <person name="Wilming L.G."/>
            <person name="Aidinis V."/>
            <person name="Allen J.E."/>
            <person name="Ambesi-Impiombato A."/>
            <person name="Apweiler R."/>
            <person name="Aturaliya R.N."/>
            <person name="Bailey T.L."/>
            <person name="Bansal M."/>
            <person name="Baxter L."/>
            <person name="Beisel K.W."/>
            <person name="Bersano T."/>
            <person name="Bono H."/>
            <person name="Chalk A.M."/>
            <person name="Chiu K.P."/>
            <person name="Choudhary V."/>
            <person name="Christoffels A."/>
            <person name="Clutterbuck D.R."/>
            <person name="Crowe M.L."/>
            <person name="Dalla E."/>
            <person name="Dalrymple B.P."/>
            <person name="de Bono B."/>
            <person name="Della Gatta G."/>
            <person name="di Bernardo D."/>
            <person name="Down T."/>
            <person name="Engstrom P."/>
            <person name="Fagiolini M."/>
            <person name="Faulkner G."/>
            <person name="Fletcher C.F."/>
            <person name="Fukushima T."/>
            <person name="Furuno M."/>
            <person name="Futaki S."/>
            <person name="Gariboldi M."/>
            <person name="Georgii-Hemming P."/>
            <person name="Gingeras T.R."/>
            <person name="Gojobori T."/>
            <person name="Green R.E."/>
            <person name="Gustincich S."/>
            <person name="Harbers M."/>
            <person name="Hayashi Y."/>
            <person name="Hensch T.K."/>
            <person name="Hirokawa N."/>
            <person name="Hill D."/>
            <person name="Huminiecki L."/>
            <person name="Iacono M."/>
            <person name="Ikeo K."/>
            <person name="Iwama A."/>
            <person name="Ishikawa T."/>
            <person name="Jakt M."/>
            <person name="Kanapin A."/>
            <person name="Katoh M."/>
            <person name="Kawasawa Y."/>
            <person name="Kelso J."/>
            <person name="Kitamura H."/>
            <person name="Kitano H."/>
            <person name="Kollias G."/>
            <person name="Krishnan S.P."/>
            <person name="Kruger A."/>
            <person name="Kummerfeld S.K."/>
            <person name="Kurochkin I.V."/>
            <person name="Lareau L.F."/>
            <person name="Lazarevic D."/>
            <person name="Lipovich L."/>
            <person name="Liu J."/>
            <person name="Liuni S."/>
            <person name="McWilliam S."/>
            <person name="Madan Babu M."/>
            <person name="Madera M."/>
            <person name="Marchionni L."/>
            <person name="Matsuda H."/>
            <person name="Matsuzawa S."/>
            <person name="Miki H."/>
            <person name="Mignone F."/>
            <person name="Miyake S."/>
            <person name="Morris K."/>
            <person name="Mottagui-Tabar S."/>
            <person name="Mulder N."/>
            <person name="Nakano N."/>
            <person name="Nakauchi H."/>
            <person name="Ng P."/>
            <person name="Nilsson R."/>
            <person name="Nishiguchi S."/>
            <person name="Nishikawa S."/>
            <person name="Nori F."/>
            <person name="Ohara O."/>
            <person name="Okazaki Y."/>
            <person name="Orlando V."/>
            <person name="Pang K.C."/>
            <person name="Pavan W.J."/>
            <person name="Pavesi G."/>
            <person name="Pesole G."/>
            <person name="Petrovsky N."/>
            <person name="Piazza S."/>
            <person name="Reed J."/>
            <person name="Reid J.F."/>
            <person name="Ring B.Z."/>
            <person name="Ringwald M."/>
            <person name="Rost B."/>
            <person name="Ruan Y."/>
            <person name="Salzberg S.L."/>
            <person name="Sandelin A."/>
            <person name="Schneider C."/>
            <person name="Schoenbach C."/>
            <person name="Sekiguchi K."/>
            <person name="Semple C.A."/>
            <person name="Seno S."/>
            <person name="Sessa L."/>
            <person name="Sheng Y."/>
            <person name="Shibata Y."/>
            <person name="Shimada H."/>
            <person name="Shimada K."/>
            <person name="Silva D."/>
            <person name="Sinclair B."/>
            <person name="Sperling S."/>
            <person name="Stupka E."/>
            <person name="Sugiura K."/>
            <person name="Sultana R."/>
            <person name="Takenaka Y."/>
            <person name="Taki K."/>
            <person name="Tammoja K."/>
            <person name="Tan S.L."/>
            <person name="Tang S."/>
            <person name="Taylor M.S."/>
            <person name="Tegner J."/>
            <person name="Teichmann S.A."/>
            <person name="Ueda H.R."/>
            <person name="van Nimwegen E."/>
            <person name="Verardo R."/>
            <person name="Wei C.L."/>
            <person name="Yagi K."/>
            <person name="Yamanishi H."/>
            <person name="Zabarovsky E."/>
            <person name="Zhu S."/>
            <person name="Zimmer A."/>
            <person name="Hide W."/>
            <person name="Bult C."/>
            <person name="Grimmond S.M."/>
            <person name="Teasdale R.D."/>
            <person name="Liu E.T."/>
            <person name="Brusic V."/>
            <person name="Quackenbush J."/>
            <person name="Wahlestedt C."/>
            <person name="Mattick J.S."/>
            <person name="Hume D.A."/>
            <person name="Kai C."/>
            <person name="Sasaki D."/>
            <person name="Tomaru Y."/>
            <person name="Fukuda S."/>
            <person name="Kanamori-Katayama M."/>
            <person name="Suzuki M."/>
            <person name="Aoki J."/>
            <person name="Arakawa T."/>
            <person name="Iida J."/>
            <person name="Imamura K."/>
            <person name="Itoh M."/>
            <person name="Kato T."/>
            <person name="Kawaji H."/>
            <person name="Kawagashira N."/>
            <person name="Kawashima T."/>
            <person name="Kojima M."/>
            <person name="Kondo S."/>
            <person name="Konno H."/>
            <person name="Nakano K."/>
            <person name="Ninomiya N."/>
            <person name="Nishio T."/>
            <person name="Okada M."/>
            <person name="Plessy C."/>
            <person name="Shibata K."/>
            <person name="Shiraki T."/>
            <person name="Suzuki S."/>
            <person name="Tagami M."/>
            <person name="Waki K."/>
            <person name="Watahiki A."/>
            <person name="Okamura-Oho Y."/>
            <person name="Suzuki H."/>
            <person name="Kawai J."/>
            <person name="Hayashizaki Y."/>
        </authorList>
    </citation>
    <scope>NUCLEOTIDE SEQUENCE [LARGE SCALE MRNA] OF 1-393</scope>
    <source>
        <strain>C57BL/6J</strain>
        <tissue>Testis</tissue>
    </source>
</reference>
<comment type="similarity">
    <text evidence="3">Belongs to the FAM227 family.</text>
</comment>
<comment type="sequence caution" evidence="3">
    <conflict type="miscellaneous discrepancy">
        <sequence resource="EMBL-CDS" id="BAB30022"/>
    </conflict>
    <text>Intron retention. The sequence differs at its 3' end due to intron retention.</text>
</comment>
<evidence type="ECO:0000255" key="1"/>
<evidence type="ECO:0000256" key="2">
    <source>
        <dbReference type="SAM" id="MobiDB-lite"/>
    </source>
</evidence>
<evidence type="ECO:0000305" key="3"/>